<evidence type="ECO:0000255" key="1"/>
<evidence type="ECO:0000255" key="2">
    <source>
        <dbReference type="PROSITE-ProRule" id="PRU00076"/>
    </source>
</evidence>
<evidence type="ECO:0000255" key="3">
    <source>
        <dbReference type="PROSITE-ProRule" id="PRU00368"/>
    </source>
</evidence>
<evidence type="ECO:0000255" key="4">
    <source>
        <dbReference type="PROSITE-ProRule" id="PRU00384"/>
    </source>
</evidence>
<evidence type="ECO:0000256" key="5">
    <source>
        <dbReference type="SAM" id="MobiDB-lite"/>
    </source>
</evidence>
<evidence type="ECO:0000269" key="6">
    <source>
    </source>
</evidence>
<evidence type="ECO:0000269" key="7">
    <source>
    </source>
</evidence>
<evidence type="ECO:0000269" key="8">
    <source>
    </source>
</evidence>
<evidence type="ECO:0000269" key="9">
    <source>
    </source>
</evidence>
<evidence type="ECO:0000269" key="10">
    <source>
    </source>
</evidence>
<evidence type="ECO:0000269" key="11">
    <source>
    </source>
</evidence>
<evidence type="ECO:0000269" key="12">
    <source>
    </source>
</evidence>
<evidence type="ECO:0000269" key="13">
    <source>
    </source>
</evidence>
<evidence type="ECO:0000269" key="14">
    <source>
    </source>
</evidence>
<evidence type="ECO:0000269" key="15">
    <source>
    </source>
</evidence>
<evidence type="ECO:0000269" key="16">
    <source>
    </source>
</evidence>
<evidence type="ECO:0000269" key="17">
    <source>
    </source>
</evidence>
<evidence type="ECO:0000269" key="18">
    <source>
    </source>
</evidence>
<evidence type="ECO:0000303" key="19">
    <source>
    </source>
</evidence>
<evidence type="ECO:0000305" key="20"/>
<dbReference type="EMBL" id="U27109">
    <property type="protein sequence ID" value="AAC52065.1"/>
    <property type="molecule type" value="mRNA"/>
</dbReference>
<dbReference type="EMBL" id="AK125557">
    <property type="protein sequence ID" value="BAC86201.1"/>
    <property type="molecule type" value="mRNA"/>
</dbReference>
<dbReference type="EMBL" id="AK313566">
    <property type="protein sequence ID" value="BAG36340.1"/>
    <property type="molecule type" value="mRNA"/>
</dbReference>
<dbReference type="EMBL" id="AC093759">
    <property type="protein sequence ID" value="AAY40957.1"/>
    <property type="molecule type" value="Genomic_DNA"/>
</dbReference>
<dbReference type="EMBL" id="CH471057">
    <property type="protein sequence ID" value="EAX06038.1"/>
    <property type="molecule type" value="Genomic_DNA"/>
</dbReference>
<dbReference type="EMBL" id="BC063848">
    <property type="protein sequence ID" value="AAH63848.1"/>
    <property type="molecule type" value="mRNA"/>
</dbReference>
<dbReference type="CCDS" id="CCDS3635.1">
    <molecule id="Q13201-1"/>
</dbReference>
<dbReference type="PIR" id="A57384">
    <property type="entry name" value="A57384"/>
</dbReference>
<dbReference type="RefSeq" id="NP_001358332.1">
    <molecule id="Q13201-1"/>
    <property type="nucleotide sequence ID" value="NM_001371403.1"/>
</dbReference>
<dbReference type="RefSeq" id="NP_031377.2">
    <molecule id="Q13201-1"/>
    <property type="nucleotide sequence ID" value="NM_007351.2"/>
</dbReference>
<dbReference type="RefSeq" id="XP_016863382.1">
    <property type="nucleotide sequence ID" value="XM_017007893.1"/>
</dbReference>
<dbReference type="SMR" id="Q13201"/>
<dbReference type="BioGRID" id="116577">
    <property type="interactions" value="27"/>
</dbReference>
<dbReference type="ComplexPortal" id="CPX-445">
    <property type="entry name" value="Multimerin-1 complex"/>
</dbReference>
<dbReference type="ComplexPortal" id="CPX-460">
    <property type="entry name" value="Platelet glycoprotein Ia* complex"/>
</dbReference>
<dbReference type="ComplexPortal" id="CPX-461">
    <property type="entry name" value="155 kDa platelet multimerin complex"/>
</dbReference>
<dbReference type="FunCoup" id="Q13201">
    <property type="interactions" value="96"/>
</dbReference>
<dbReference type="IntAct" id="Q13201">
    <property type="interactions" value="21"/>
</dbReference>
<dbReference type="STRING" id="9606.ENSP00000378431"/>
<dbReference type="GlyConnect" id="668">
    <property type="glycosylation" value="27 N-Linked glycans (16 sites)"/>
</dbReference>
<dbReference type="GlyCosmos" id="Q13201">
    <property type="glycosylation" value="28 sites, 35 glycans"/>
</dbReference>
<dbReference type="GlyGen" id="Q13201">
    <property type="glycosylation" value="31 sites, 63 N-linked glycans (18 sites), 3 O-linked glycans (6 sites)"/>
</dbReference>
<dbReference type="iPTMnet" id="Q13201"/>
<dbReference type="PhosphoSitePlus" id="Q13201"/>
<dbReference type="BioMuta" id="MMRN1"/>
<dbReference type="DMDM" id="143811421"/>
<dbReference type="OGP" id="Q13201"/>
<dbReference type="jPOST" id="Q13201"/>
<dbReference type="MassIVE" id="Q13201"/>
<dbReference type="PaxDb" id="9606-ENSP00000378431"/>
<dbReference type="PeptideAtlas" id="Q13201"/>
<dbReference type="ProteomicsDB" id="59220">
    <molecule id="Q13201-1"/>
</dbReference>
<dbReference type="ProteomicsDB" id="59221">
    <molecule id="Q13201-2"/>
</dbReference>
<dbReference type="Antibodypedia" id="25682">
    <property type="antibodies" value="198 antibodies from 24 providers"/>
</dbReference>
<dbReference type="DNASU" id="22915"/>
<dbReference type="Ensembl" id="ENST00000264790.7">
    <molecule id="Q13201-1"/>
    <property type="protein sequence ID" value="ENSP00000264790.2"/>
    <property type="gene ID" value="ENSG00000138722.10"/>
</dbReference>
<dbReference type="Ensembl" id="ENST00000394980.5">
    <molecule id="Q13201-1"/>
    <property type="protein sequence ID" value="ENSP00000378431.1"/>
    <property type="gene ID" value="ENSG00000138722.10"/>
</dbReference>
<dbReference type="GeneID" id="22915"/>
<dbReference type="KEGG" id="hsa:22915"/>
<dbReference type="MANE-Select" id="ENST00000264790.7">
    <property type="protein sequence ID" value="ENSP00000264790.2"/>
    <property type="RefSeq nucleotide sequence ID" value="NM_007351.3"/>
    <property type="RefSeq protein sequence ID" value="NP_031377.2"/>
</dbReference>
<dbReference type="UCSC" id="uc003hst.4">
    <molecule id="Q13201-1"/>
    <property type="organism name" value="human"/>
</dbReference>
<dbReference type="AGR" id="HGNC:7178"/>
<dbReference type="CTD" id="22915"/>
<dbReference type="DisGeNET" id="22915"/>
<dbReference type="GeneCards" id="MMRN1"/>
<dbReference type="HGNC" id="HGNC:7178">
    <property type="gene designation" value="MMRN1"/>
</dbReference>
<dbReference type="HPA" id="ENSG00000138722">
    <property type="expression patterns" value="Low tissue specificity"/>
</dbReference>
<dbReference type="MIM" id="601456">
    <property type="type" value="gene"/>
</dbReference>
<dbReference type="neXtProt" id="NX_Q13201"/>
<dbReference type="OpenTargets" id="ENSG00000138722"/>
<dbReference type="PharmGKB" id="PA30891"/>
<dbReference type="VEuPathDB" id="HostDB:ENSG00000138722"/>
<dbReference type="eggNOG" id="ENOG502QTYP">
    <property type="taxonomic scope" value="Eukaryota"/>
</dbReference>
<dbReference type="GeneTree" id="ENSGT01030000234633"/>
<dbReference type="InParanoid" id="Q13201"/>
<dbReference type="OMA" id="QDNYMLK"/>
<dbReference type="OrthoDB" id="10044191at2759"/>
<dbReference type="PAN-GO" id="Q13201">
    <property type="GO annotations" value="0 GO annotations based on evolutionary models"/>
</dbReference>
<dbReference type="PhylomeDB" id="Q13201"/>
<dbReference type="TreeFam" id="TF336041"/>
<dbReference type="PathwayCommons" id="Q13201"/>
<dbReference type="Reactome" id="R-HSA-114608">
    <property type="pathway name" value="Platelet degranulation"/>
</dbReference>
<dbReference type="SignaLink" id="Q13201"/>
<dbReference type="BioGRID-ORCS" id="22915">
    <property type="hits" value="4 hits in 1144 CRISPR screens"/>
</dbReference>
<dbReference type="ChiTaRS" id="MMRN1">
    <property type="organism name" value="human"/>
</dbReference>
<dbReference type="GeneWiki" id="MMRN1"/>
<dbReference type="GenomeRNAi" id="22915"/>
<dbReference type="Pharos" id="Q13201">
    <property type="development level" value="Tbio"/>
</dbReference>
<dbReference type="PRO" id="PR:Q13201"/>
<dbReference type="Proteomes" id="UP000005640">
    <property type="component" value="Chromosome 4"/>
</dbReference>
<dbReference type="RNAct" id="Q13201">
    <property type="molecule type" value="protein"/>
</dbReference>
<dbReference type="Bgee" id="ENSG00000138722">
    <property type="expression patterns" value="Expressed in pericardium and 139 other cell types or tissues"/>
</dbReference>
<dbReference type="ExpressionAtlas" id="Q13201">
    <property type="expression patterns" value="baseline and differential"/>
</dbReference>
<dbReference type="GO" id="GO:0031012">
    <property type="term" value="C:extracellular matrix"/>
    <property type="evidence" value="ECO:0007005"/>
    <property type="project" value="BHF-UCL"/>
</dbReference>
<dbReference type="GO" id="GO:0005576">
    <property type="term" value="C:extracellular region"/>
    <property type="evidence" value="ECO:0000314"/>
    <property type="project" value="UniProtKB"/>
</dbReference>
<dbReference type="GO" id="GO:1990972">
    <property type="term" value="C:multimerin complex"/>
    <property type="evidence" value="ECO:0000353"/>
    <property type="project" value="ComplexPortal"/>
</dbReference>
<dbReference type="GO" id="GO:0031091">
    <property type="term" value="C:platelet alpha granule"/>
    <property type="evidence" value="ECO:0000314"/>
    <property type="project" value="ComplexPortal"/>
</dbReference>
<dbReference type="GO" id="GO:0031093">
    <property type="term" value="C:platelet alpha granule lumen"/>
    <property type="evidence" value="ECO:0000304"/>
    <property type="project" value="Reactome"/>
</dbReference>
<dbReference type="GO" id="GO:0005509">
    <property type="term" value="F:calcium ion binding"/>
    <property type="evidence" value="ECO:0007669"/>
    <property type="project" value="InterPro"/>
</dbReference>
<dbReference type="GO" id="GO:0007596">
    <property type="term" value="P:blood coagulation"/>
    <property type="evidence" value="ECO:0000304"/>
    <property type="project" value="ProtInc"/>
</dbReference>
<dbReference type="GO" id="GO:0007155">
    <property type="term" value="P:cell adhesion"/>
    <property type="evidence" value="ECO:0000304"/>
    <property type="project" value="ProtInc"/>
</dbReference>
<dbReference type="GO" id="GO:0033627">
    <property type="term" value="P:cell adhesion mediated by integrin"/>
    <property type="evidence" value="ECO:0000314"/>
    <property type="project" value="ComplexPortal"/>
</dbReference>
<dbReference type="GO" id="GO:0090051">
    <property type="term" value="P:negative regulation of cell migration involved in sprouting angiogenesis"/>
    <property type="evidence" value="ECO:0000318"/>
    <property type="project" value="GO_Central"/>
</dbReference>
<dbReference type="GO" id="GO:0030948">
    <property type="term" value="P:negative regulation of vascular endothelial growth factor receptor signaling pathway"/>
    <property type="evidence" value="ECO:0000318"/>
    <property type="project" value="GO_Central"/>
</dbReference>
<dbReference type="GO" id="GO:0061045">
    <property type="term" value="P:negative regulation of wound healing"/>
    <property type="evidence" value="ECO:0000314"/>
    <property type="project" value="ComplexPortal"/>
</dbReference>
<dbReference type="GO" id="GO:1901731">
    <property type="term" value="P:positive regulation of platelet aggregation"/>
    <property type="evidence" value="ECO:0000314"/>
    <property type="project" value="ComplexPortal"/>
</dbReference>
<dbReference type="CDD" id="cd00054">
    <property type="entry name" value="EGF_CA"/>
    <property type="match status" value="1"/>
</dbReference>
<dbReference type="FunFam" id="2.10.25.10:FF:000548">
    <property type="entry name" value="Multimerin 1"/>
    <property type="match status" value="1"/>
</dbReference>
<dbReference type="FunFam" id="2.60.120.40:FF:000009">
    <property type="entry name" value="Multimerin-1"/>
    <property type="match status" value="1"/>
</dbReference>
<dbReference type="Gene3D" id="2.60.120.40">
    <property type="match status" value="1"/>
</dbReference>
<dbReference type="Gene3D" id="2.10.25.10">
    <property type="entry name" value="Laminin"/>
    <property type="match status" value="1"/>
</dbReference>
<dbReference type="InterPro" id="IPR001073">
    <property type="entry name" value="C1q_dom"/>
</dbReference>
<dbReference type="InterPro" id="IPR050392">
    <property type="entry name" value="Collagen/C1q_domain"/>
</dbReference>
<dbReference type="InterPro" id="IPR001881">
    <property type="entry name" value="EGF-like_Ca-bd_dom"/>
</dbReference>
<dbReference type="InterPro" id="IPR000742">
    <property type="entry name" value="EGF-like_dom"/>
</dbReference>
<dbReference type="InterPro" id="IPR000152">
    <property type="entry name" value="EGF-type_Asp/Asn_hydroxyl_site"/>
</dbReference>
<dbReference type="InterPro" id="IPR011489">
    <property type="entry name" value="EMI_domain"/>
</dbReference>
<dbReference type="InterPro" id="IPR008983">
    <property type="entry name" value="Tumour_necrosis_fac-like_dom"/>
</dbReference>
<dbReference type="PANTHER" id="PTHR15427">
    <property type="entry name" value="EMILIN ELASTIN MICROFIBRIL INTERFACE-LOCATED PROTEIN ELASTIN MICROFIBRIL INTERFACER"/>
    <property type="match status" value="1"/>
</dbReference>
<dbReference type="PANTHER" id="PTHR15427:SF3">
    <property type="entry name" value="MULTIMERIN-1"/>
    <property type="match status" value="1"/>
</dbReference>
<dbReference type="Pfam" id="PF00386">
    <property type="entry name" value="C1q"/>
    <property type="match status" value="1"/>
</dbReference>
<dbReference type="Pfam" id="PF00008">
    <property type="entry name" value="EGF"/>
    <property type="match status" value="1"/>
</dbReference>
<dbReference type="Pfam" id="PF07546">
    <property type="entry name" value="EMI"/>
    <property type="match status" value="1"/>
</dbReference>
<dbReference type="PRINTS" id="PR00007">
    <property type="entry name" value="COMPLEMNTC1Q"/>
</dbReference>
<dbReference type="SMART" id="SM00110">
    <property type="entry name" value="C1Q"/>
    <property type="match status" value="1"/>
</dbReference>
<dbReference type="SMART" id="SM00181">
    <property type="entry name" value="EGF"/>
    <property type="match status" value="1"/>
</dbReference>
<dbReference type="SMART" id="SM00179">
    <property type="entry name" value="EGF_CA"/>
    <property type="match status" value="1"/>
</dbReference>
<dbReference type="SUPFAM" id="SSF57196">
    <property type="entry name" value="EGF/Laminin"/>
    <property type="match status" value="1"/>
</dbReference>
<dbReference type="SUPFAM" id="SSF49842">
    <property type="entry name" value="TNF-like"/>
    <property type="match status" value="1"/>
</dbReference>
<dbReference type="PROSITE" id="PS50871">
    <property type="entry name" value="C1Q"/>
    <property type="match status" value="1"/>
</dbReference>
<dbReference type="PROSITE" id="PS00022">
    <property type="entry name" value="EGF_1"/>
    <property type="match status" value="1"/>
</dbReference>
<dbReference type="PROSITE" id="PS01186">
    <property type="entry name" value="EGF_2"/>
    <property type="match status" value="1"/>
</dbReference>
<dbReference type="PROSITE" id="PS50026">
    <property type="entry name" value="EGF_3"/>
    <property type="match status" value="1"/>
</dbReference>
<dbReference type="PROSITE" id="PS51041">
    <property type="entry name" value="EMI"/>
    <property type="match status" value="1"/>
</dbReference>
<organism>
    <name type="scientific">Homo sapiens</name>
    <name type="common">Human</name>
    <dbReference type="NCBI Taxonomy" id="9606"/>
    <lineage>
        <taxon>Eukaryota</taxon>
        <taxon>Metazoa</taxon>
        <taxon>Chordata</taxon>
        <taxon>Craniata</taxon>
        <taxon>Vertebrata</taxon>
        <taxon>Euteleostomi</taxon>
        <taxon>Mammalia</taxon>
        <taxon>Eutheria</taxon>
        <taxon>Euarchontoglires</taxon>
        <taxon>Primates</taxon>
        <taxon>Haplorrhini</taxon>
        <taxon>Catarrhini</taxon>
        <taxon>Hominidae</taxon>
        <taxon>Homo</taxon>
    </lineage>
</organism>
<sequence>MKGARLFVLLSSLWSGGIGLNNSKHSWTIPEDGNSQKTMPSASVPPNKIQSLQILPTTRVMSAEIATTPEARTSEDSLLKSTLPPSETSAPAEGVRNQTLTSTEKAEGVVKLQNLTLPTNASIKFNPGAESVVLSNSTLKFLQSFARKSNEQATSLNTVGGTGGIGGVGGTGGVGNRAPRETYLSRGDSSSSQRTDYQKSNFETTRGKNWCAYVHTRLSPTVILDNQVTYVPGGKGPCGWTGGSCPQRSQKISNPVYRMQHKIVTSLDWRCCPGYSGPKCQLRAQEQQSLIHTNQAESHTAVGRGVAEQQQQQGCGDPEVMQKMTDQVNYQAMKLTLLQKKIDNISLTVNDVRNTYSSLEGKVSEDKSREFQSLLKGLKSKSINVLIRDIVREQFKIFQNDMQETVAQLFKTVSSLSEDLESTRQIIQKVNESVVSIAAQQKFVLVQENRPTLTDIVELRNHIVNVRQEMTLTCEKPIKELEVKQTHLEGALEQEHSRSILYYESLNKTLSKLKEVHEQLLSTEQVSDQKNAPAAESVSNNVTEYMSTLHENIKKQSLMMLQMFEDLHIQESKINNLTVSLEMEKESLRGECEDMLSKCRNDFKFQLKDTEENLHVLNQTLAEVLFPMDNKMDKMSEQLNDLTYDMEILQPLLEQGASLRQTMTYEQPKEAIVIRKKIENLTSAVNSLNFIIKELTKRHNLLRNEVQGRDDALERRINEYALEMEDGLNKTMTIINNAIDFIQDNYALKETLSTIKDNSEIHHKCTSDMETILTFIPQFHRLNDSIQTLVNDNQRYNFVLQVAKTLAGIPRDEKLNQSNFQKMYQMFNETTSQVRKYQQNMSHLEEKLLLTTKISKNFETRLQDIESKVTQTLIPYYISVKKGSVVTNERDQALQLQVLNSRFKALEAKSIHLSINFFSLNKTLHEVLTMCHNASTSVSELNATIPKWIKHSLPDIQLLQKGLTEFVEPIIQIKTQAALSNLTCCIDRSLPGSLANVVKSQKQVKSLPKKINALKKPTVNLTTVLIGRTQRNTDNIIYPEEYSSCSRHPCQNGGTCINGRTSFTCACRHPFTGDNCTIKLVEENALAPDFSKGSYRYAPMVAFFASHTYGMTIPGPILFNNLDVNYGASYTPRTGKFRIPYLGVYVFKYTIESFSAHISGFLVVDGIDKLAFESENINSEIHCDRVLTGDALLELNYGQEVWLRLAKGTIPAKFPPVTTFSGYLLYRT</sequence>
<proteinExistence type="evidence at protein level"/>
<accession>Q13201</accession>
<accession>Q4W5L1</accession>
<accession>Q6P3T8</accession>
<accession>Q6ZUL9</accession>
<name>MMRN1_HUMAN</name>
<feature type="signal peptide" evidence="1">
    <location>
        <begin position="1"/>
        <end position="19"/>
    </location>
</feature>
<feature type="chain" id="PRO_0000007821" description="Multimerin-1">
    <location>
        <begin position="20"/>
        <end position="1228"/>
    </location>
</feature>
<feature type="chain" id="PRO_0000367047" description="Platelet glycoprotein Ia*">
    <location>
        <begin position="184"/>
        <end position="1228"/>
    </location>
</feature>
<feature type="chain" id="PRO_0000367048" description="155 kDa platelet multimerin">
    <location>
        <begin position="318"/>
        <end position="1228"/>
    </location>
</feature>
<feature type="domain" description="EMI" evidence="4">
    <location>
        <begin position="207"/>
        <end position="282"/>
    </location>
</feature>
<feature type="domain" description="EGF-like" evidence="2">
    <location>
        <begin position="1041"/>
        <end position="1077"/>
    </location>
</feature>
<feature type="domain" description="C1q" evidence="3">
    <location>
        <begin position="1096"/>
        <end position="1228"/>
    </location>
</feature>
<feature type="region of interest" description="Disordered" evidence="5">
    <location>
        <begin position="68"/>
        <end position="98"/>
    </location>
</feature>
<feature type="region of interest" description="Disordered" evidence="5">
    <location>
        <begin position="157"/>
        <end position="200"/>
    </location>
</feature>
<feature type="coiled-coil region" evidence="1">
    <location>
        <begin position="333"/>
        <end position="365"/>
    </location>
</feature>
<feature type="coiled-coil region" evidence="1">
    <location>
        <begin position="400"/>
        <end position="430"/>
    </location>
</feature>
<feature type="coiled-coil region" evidence="1">
    <location>
        <begin position="503"/>
        <end position="523"/>
    </location>
</feature>
<feature type="coiled-coil region" evidence="1">
    <location>
        <begin position="580"/>
        <end position="650"/>
    </location>
</feature>
<feature type="coiled-coil region" evidence="1">
    <location>
        <begin position="675"/>
        <end position="726"/>
    </location>
</feature>
<feature type="coiled-coil region" evidence="1">
    <location>
        <begin position="819"/>
        <end position="869"/>
    </location>
</feature>
<feature type="short sequence motif" description="Cell attachment site" evidence="1">
    <location>
        <begin position="186"/>
        <end position="188"/>
    </location>
</feature>
<feature type="compositionally biased region" description="Polar residues" evidence="5">
    <location>
        <begin position="79"/>
        <end position="89"/>
    </location>
</feature>
<feature type="compositionally biased region" description="Gly residues" evidence="5">
    <location>
        <begin position="160"/>
        <end position="175"/>
    </location>
</feature>
<feature type="compositionally biased region" description="Polar residues" evidence="5">
    <location>
        <begin position="187"/>
        <end position="200"/>
    </location>
</feature>
<feature type="glycosylation site" description="N-linked (GlcNAc...) asparagine" evidence="1">
    <location>
        <position position="21"/>
    </location>
</feature>
<feature type="glycosylation site" description="N-linked (GlcNAc...) asparagine" evidence="1">
    <location>
        <position position="97"/>
    </location>
</feature>
<feature type="glycosylation site" description="N-linked (GlcNAc...) asparagine" evidence="8 9">
    <location>
        <position position="114"/>
    </location>
</feature>
<feature type="glycosylation site" description="N-linked (GlcNAc...) asparagine" evidence="9">
    <location>
        <position position="120"/>
    </location>
</feature>
<feature type="glycosylation site" description="N-linked (GlcNAc...) (complex) asparagine" evidence="9 12">
    <location>
        <position position="136"/>
    </location>
</feature>
<feature type="glycosylation site" description="O-linked (Fuc) threonine" evidence="14 15">
    <location>
        <position position="216"/>
    </location>
</feature>
<feature type="glycosylation site" description="O-linked (Fuc) threonine" evidence="15">
    <location>
        <position position="265"/>
    </location>
</feature>
<feature type="glycosylation site" description="N-linked (GlcNAc...) asparagine" evidence="13">
    <location>
        <position position="344"/>
    </location>
</feature>
<feature type="glycosylation site" description="N-linked (GlcNAc...) asparagine" evidence="1">
    <location>
        <position position="431"/>
    </location>
</feature>
<feature type="glycosylation site" description="N-linked (GlcNAc...) asparagine" evidence="1">
    <location>
        <position position="507"/>
    </location>
</feature>
<feature type="glycosylation site" description="N-linked (GlcNAc...) asparagine" evidence="1">
    <location>
        <position position="541"/>
    </location>
</feature>
<feature type="glycosylation site" description="N-linked (GlcNAc...) asparagine" evidence="1">
    <location>
        <position position="576"/>
    </location>
</feature>
<feature type="glycosylation site" description="N-linked (GlcNAc...) asparagine" evidence="9">
    <location>
        <position position="618"/>
    </location>
</feature>
<feature type="glycosylation site" description="N-linked (GlcNAc...) asparagine" evidence="1">
    <location>
        <position position="680"/>
    </location>
</feature>
<feature type="glycosylation site" description="N-linked (GlcNAc...) asparagine" evidence="9 13">
    <location>
        <position position="729"/>
    </location>
</feature>
<feature type="glycosylation site" description="N-linked (GlcNAc...) asparagine" evidence="1">
    <location>
        <position position="783"/>
    </location>
</feature>
<feature type="glycosylation site" description="N-linked (GlcNAc...) asparagine" evidence="1">
    <location>
        <position position="816"/>
    </location>
</feature>
<feature type="glycosylation site" description="N-linked (GlcNAc...) asparagine" evidence="1">
    <location>
        <position position="828"/>
    </location>
</feature>
<feature type="glycosylation site" description="N-linked (GlcNAc...) asparagine" evidence="1">
    <location>
        <position position="840"/>
    </location>
</feature>
<feature type="glycosylation site" description="N-linked (GlcNAc...) asparagine" evidence="1">
    <location>
        <position position="921"/>
    </location>
</feature>
<feature type="glycosylation site" description="N-linked (GlcNAc...) asparagine" evidence="1">
    <location>
        <position position="933"/>
    </location>
</feature>
<feature type="glycosylation site" description="N-linked (GlcNAc...) asparagine" evidence="13">
    <location>
        <position position="942"/>
    </location>
</feature>
<feature type="glycosylation site" description="N-linked (GlcNAc...) asparagine" evidence="1">
    <location>
        <position position="981"/>
    </location>
</feature>
<feature type="glycosylation site" description="N-linked (GlcNAc...) asparagine" evidence="13">
    <location>
        <position position="1020"/>
    </location>
</feature>
<feature type="glycosylation site" description="O-linked (Fuc) threonine" evidence="14 15">
    <location>
        <position position="1055"/>
    </location>
</feature>
<feature type="glycosylation site" description="N-linked (GlcNAc...) asparagine" evidence="1">
    <location>
        <position position="1075"/>
    </location>
</feature>
<feature type="disulfide bond" evidence="4">
    <location>
        <begin position="211"/>
        <end position="272"/>
    </location>
</feature>
<feature type="disulfide bond" evidence="4">
    <location>
        <begin position="238"/>
        <end position="245"/>
    </location>
</feature>
<feature type="disulfide bond" evidence="4">
    <location>
        <begin position="271"/>
        <end position="280"/>
    </location>
</feature>
<feature type="disulfide bond" evidence="2">
    <location>
        <begin position="1045"/>
        <end position="1056"/>
    </location>
</feature>
<feature type="disulfide bond" evidence="2">
    <location>
        <begin position="1050"/>
        <end position="1065"/>
    </location>
</feature>
<feature type="disulfide bond" evidence="2">
    <location>
        <begin position="1067"/>
        <end position="1076"/>
    </location>
</feature>
<feature type="splice variant" id="VSP_036610" description="In isoform 2." evidence="19">
    <location>
        <begin position="71"/>
        <end position="104"/>
    </location>
</feature>
<feature type="splice variant" id="VSP_036611" description="In isoform 2." evidence="19">
    <location>
        <begin position="377"/>
        <end position="1039"/>
    </location>
</feature>
<feature type="sequence variant" id="VAR_031471" description="In dbSNP:rs1442138.">
    <original>T</original>
    <variation>A</variation>
    <location>
        <position position="58"/>
    </location>
</feature>
<feature type="sequence variant" id="VAR_031472" description="In dbSNP:rs3756065.">
    <original>T</original>
    <variation>A</variation>
    <location>
        <position position="805"/>
    </location>
</feature>
<feature type="sequence variant" id="VAR_031473" description="In dbSNP:rs12646270.">
    <original>G</original>
    <variation>D</variation>
    <location>
        <position position="883"/>
    </location>
</feature>
<feature type="sequence variant" id="VAR_031474" description="In dbSNP:rs17855885." evidence="7">
    <original>T</original>
    <variation>R</variation>
    <location>
        <position position="964"/>
    </location>
</feature>
<feature type="mutagenesis site" description="Strongly reduced protein secretion." evidence="14 15">
    <original>T</original>
    <variation>A</variation>
    <location>
        <position position="216"/>
    </location>
</feature>
<feature type="mutagenesis site" description="Does not significantly affect protein secretion." evidence="15">
    <original>T</original>
    <variation>A</variation>
    <location>
        <position position="265"/>
    </location>
</feature>
<feature type="mutagenesis site" description="Abolishes protein secretion." evidence="14 15">
    <original>T</original>
    <variation>A</variation>
    <location>
        <position position="1055"/>
    </location>
</feature>
<feature type="sequence conflict" description="In Ref. 2; BAC86201." evidence="20" ref="2">
    <original>R</original>
    <variation>K</variation>
    <location>
        <position position="217"/>
    </location>
</feature>
<feature type="sequence conflict" description="In Ref. 1; AAC52065." evidence="20" ref="1">
    <original>I</original>
    <variation>T</variation>
    <location>
        <position position="223"/>
    </location>
</feature>
<feature type="sequence conflict" description="In Ref. 1; AAC52065." evidence="20" ref="1">
    <original>L</original>
    <variation>S</variation>
    <location>
        <position position="982"/>
    </location>
</feature>
<comment type="function">
    <text evidence="10 11 16">Carrier protein for platelet (but not plasma) factor V/Va. Plays a role in the storage and stabilization of factor V in platelets. Upon release following platelet activation, may limit platelet and plasma factor Va-dependent thrombin generation. Ligand for integrin alpha-IIb/beta-3 and integrin alpha-V/beta-3 on activated platelets, and may function as an extracellular matrix or adhesive protein.</text>
</comment>
<comment type="subunit">
    <text evidence="6 11 16">Multimeric. Composed of varying sized, disulfide-linked multimers, the smallest of which is a homotrimer. Proteolysis of the promultimerin in the N-terminal region, leads to the mature p155 form that is stored in platelets. Interacts with factor V/Va.</text>
</comment>
<comment type="subcellular location">
    <subcellularLocation>
        <location evidence="14 15">Secreted</location>
    </subcellularLocation>
    <text evidence="14 15">O-fucosylation of Thr-216 and Thr-1055 is important for protein secretion.</text>
</comment>
<comment type="alternative products">
    <event type="alternative splicing"/>
    <isoform>
        <id>Q13201-1</id>
        <name>1</name>
        <sequence type="displayed"/>
    </isoform>
    <isoform>
        <id>Q13201-2</id>
        <name>2</name>
        <sequence type="described" ref="VSP_036610 VSP_036611"/>
    </isoform>
</comment>
<comment type="tissue specificity">
    <text evidence="16 17">Synthesized by endothelial cells and megakaryocytes. Stored in platelet alpha granules and endothelial cell Weibel-Palade bodies, following activation of these cells, it is released and attached to megakaryocytes, platelets, endothelium and subendothelium of blood vessels. Not found in plasma. Found in vascular tissues such as placenta, lung, and liver.</text>
</comment>
<comment type="PTM">
    <text evidence="16">The N-terminus is blocked.</text>
</comment>
<comment type="PTM">
    <text evidence="8 9 12 13">Extensively N-glycosylated.</text>
</comment>
<comment type="PTM">
    <text evidence="14 15">O-fucosylated within the EMI domain (at Thr-216 and Thr-265) by FUT10/POFUT3 and FUT11/POFUT4 (PubMed:39775168). O-fucosylation at Thr-216 and Thr-1055 are required for facilitating protein folding and secretion (PubMed:38237698, PubMed:39775168).</text>
</comment>
<comment type="disease">
    <text evidence="18">Deficiency in multimerin-1 due to proteolytic degradation within the platelet alpha granules is associated with an autosomal dominant bleeding disorder (factor V Quebec).</text>
</comment>
<protein>
    <recommendedName>
        <fullName>Multimerin-1</fullName>
    </recommendedName>
    <alternativeName>
        <fullName>EMILIN-4</fullName>
    </alternativeName>
    <alternativeName>
        <fullName>Elastin microfibril interface located protein 4</fullName>
        <shortName>Elastin microfibril interfacer 4</shortName>
    </alternativeName>
    <alternativeName>
        <fullName>Endothelial cell multimerin</fullName>
    </alternativeName>
    <component>
        <recommendedName>
            <fullName>Platelet glycoprotein Ia*</fullName>
        </recommendedName>
    </component>
    <component>
        <recommendedName>
            <fullName>155 kDa platelet multimerin</fullName>
            <shortName>p-155</shortName>
            <shortName>p155</shortName>
        </recommendedName>
    </component>
</protein>
<gene>
    <name type="primary">MMRN1</name>
    <name type="synonym">ECM</name>
    <name type="synonym">EMILIN4</name>
    <name type="synonym">GPIA*</name>
    <name type="synonym">MMRN</name>
</gene>
<keyword id="KW-0025">Alternative splicing</keyword>
<keyword id="KW-0175">Coiled coil</keyword>
<keyword id="KW-0903">Direct protein sequencing</keyword>
<keyword id="KW-1015">Disulfide bond</keyword>
<keyword id="KW-0245">EGF-like domain</keyword>
<keyword id="KW-0325">Glycoprotein</keyword>
<keyword id="KW-1267">Proteomics identification</keyword>
<keyword id="KW-1185">Reference proteome</keyword>
<keyword id="KW-0964">Secreted</keyword>
<keyword id="KW-0732">Signal</keyword>
<reference key="1">
    <citation type="journal article" date="1995" name="J. Biol. Chem.">
        <title>The cDNA sequence of human endothelial cell multimerin. A unique protein with RGDS, coiled-coil, and epidermal growth factor-like domains and a carboxyl terminus similar to the globular domain of complement C1q and collagens type VIII and X.</title>
        <authorList>
            <person name="Hayward C.P.M."/>
            <person name="Hassell J.A."/>
            <person name="Denomme G.A."/>
            <person name="Rachubinski R.A."/>
            <person name="Brown C."/>
            <person name="Kelton J.G."/>
        </authorList>
    </citation>
    <scope>NUCLEOTIDE SEQUENCE [MRNA] (ISOFORM 1)</scope>
    <scope>PROTEIN SEQUENCE OF 368-376</scope>
    <scope>FUNCTION</scope>
    <scope>SUBUNIT</scope>
    <scope>TISSUE SPECIFICITY</scope>
    <source>
        <tissue>Endothelial cell</tissue>
    </source>
</reference>
<reference key="2">
    <citation type="journal article" date="2004" name="Nat. Genet.">
        <title>Complete sequencing and characterization of 21,243 full-length human cDNAs.</title>
        <authorList>
            <person name="Ota T."/>
            <person name="Suzuki Y."/>
            <person name="Nishikawa T."/>
            <person name="Otsuki T."/>
            <person name="Sugiyama T."/>
            <person name="Irie R."/>
            <person name="Wakamatsu A."/>
            <person name="Hayashi K."/>
            <person name="Sato H."/>
            <person name="Nagai K."/>
            <person name="Kimura K."/>
            <person name="Makita H."/>
            <person name="Sekine M."/>
            <person name="Obayashi M."/>
            <person name="Nishi T."/>
            <person name="Shibahara T."/>
            <person name="Tanaka T."/>
            <person name="Ishii S."/>
            <person name="Yamamoto J."/>
            <person name="Saito K."/>
            <person name="Kawai Y."/>
            <person name="Isono Y."/>
            <person name="Nakamura Y."/>
            <person name="Nagahari K."/>
            <person name="Murakami K."/>
            <person name="Yasuda T."/>
            <person name="Iwayanagi T."/>
            <person name="Wagatsuma M."/>
            <person name="Shiratori A."/>
            <person name="Sudo H."/>
            <person name="Hosoiri T."/>
            <person name="Kaku Y."/>
            <person name="Kodaira H."/>
            <person name="Kondo H."/>
            <person name="Sugawara M."/>
            <person name="Takahashi M."/>
            <person name="Kanda K."/>
            <person name="Yokoi T."/>
            <person name="Furuya T."/>
            <person name="Kikkawa E."/>
            <person name="Omura Y."/>
            <person name="Abe K."/>
            <person name="Kamihara K."/>
            <person name="Katsuta N."/>
            <person name="Sato K."/>
            <person name="Tanikawa M."/>
            <person name="Yamazaki M."/>
            <person name="Ninomiya K."/>
            <person name="Ishibashi T."/>
            <person name="Yamashita H."/>
            <person name="Murakawa K."/>
            <person name="Fujimori K."/>
            <person name="Tanai H."/>
            <person name="Kimata M."/>
            <person name="Watanabe M."/>
            <person name="Hiraoka S."/>
            <person name="Chiba Y."/>
            <person name="Ishida S."/>
            <person name="Ono Y."/>
            <person name="Takiguchi S."/>
            <person name="Watanabe S."/>
            <person name="Yosida M."/>
            <person name="Hotuta T."/>
            <person name="Kusano J."/>
            <person name="Kanehori K."/>
            <person name="Takahashi-Fujii A."/>
            <person name="Hara H."/>
            <person name="Tanase T.-O."/>
            <person name="Nomura Y."/>
            <person name="Togiya S."/>
            <person name="Komai F."/>
            <person name="Hara R."/>
            <person name="Takeuchi K."/>
            <person name="Arita M."/>
            <person name="Imose N."/>
            <person name="Musashino K."/>
            <person name="Yuuki H."/>
            <person name="Oshima A."/>
            <person name="Sasaki N."/>
            <person name="Aotsuka S."/>
            <person name="Yoshikawa Y."/>
            <person name="Matsunawa H."/>
            <person name="Ichihara T."/>
            <person name="Shiohata N."/>
            <person name="Sano S."/>
            <person name="Moriya S."/>
            <person name="Momiyama H."/>
            <person name="Satoh N."/>
            <person name="Takami S."/>
            <person name="Terashima Y."/>
            <person name="Suzuki O."/>
            <person name="Nakagawa S."/>
            <person name="Senoh A."/>
            <person name="Mizoguchi H."/>
            <person name="Goto Y."/>
            <person name="Shimizu F."/>
            <person name="Wakebe H."/>
            <person name="Hishigaki H."/>
            <person name="Watanabe T."/>
            <person name="Sugiyama A."/>
            <person name="Takemoto M."/>
            <person name="Kawakami B."/>
            <person name="Yamazaki M."/>
            <person name="Watanabe K."/>
            <person name="Kumagai A."/>
            <person name="Itakura S."/>
            <person name="Fukuzumi Y."/>
            <person name="Fujimori Y."/>
            <person name="Komiyama M."/>
            <person name="Tashiro H."/>
            <person name="Tanigami A."/>
            <person name="Fujiwara T."/>
            <person name="Ono T."/>
            <person name="Yamada K."/>
            <person name="Fujii Y."/>
            <person name="Ozaki K."/>
            <person name="Hirao M."/>
            <person name="Ohmori Y."/>
            <person name="Kawabata A."/>
            <person name="Hikiji T."/>
            <person name="Kobatake N."/>
            <person name="Inagaki H."/>
            <person name="Ikema Y."/>
            <person name="Okamoto S."/>
            <person name="Okitani R."/>
            <person name="Kawakami T."/>
            <person name="Noguchi S."/>
            <person name="Itoh T."/>
            <person name="Shigeta K."/>
            <person name="Senba T."/>
            <person name="Matsumura K."/>
            <person name="Nakajima Y."/>
            <person name="Mizuno T."/>
            <person name="Morinaga M."/>
            <person name="Sasaki M."/>
            <person name="Togashi T."/>
            <person name="Oyama M."/>
            <person name="Hata H."/>
            <person name="Watanabe M."/>
            <person name="Komatsu T."/>
            <person name="Mizushima-Sugano J."/>
            <person name="Satoh T."/>
            <person name="Shirai Y."/>
            <person name="Takahashi Y."/>
            <person name="Nakagawa K."/>
            <person name="Okumura K."/>
            <person name="Nagase T."/>
            <person name="Nomura N."/>
            <person name="Kikuchi H."/>
            <person name="Masuho Y."/>
            <person name="Yamashita R."/>
            <person name="Nakai K."/>
            <person name="Yada T."/>
            <person name="Nakamura Y."/>
            <person name="Ohara O."/>
            <person name="Isogai T."/>
            <person name="Sugano S."/>
        </authorList>
    </citation>
    <scope>NUCLEOTIDE SEQUENCE [LARGE SCALE MRNA] (ISOFORMS 1 AND 2)</scope>
</reference>
<reference key="3">
    <citation type="journal article" date="2005" name="Nature">
        <title>Generation and annotation of the DNA sequences of human chromosomes 2 and 4.</title>
        <authorList>
            <person name="Hillier L.W."/>
            <person name="Graves T.A."/>
            <person name="Fulton R.S."/>
            <person name="Fulton L.A."/>
            <person name="Pepin K.H."/>
            <person name="Minx P."/>
            <person name="Wagner-McPherson C."/>
            <person name="Layman D."/>
            <person name="Wylie K."/>
            <person name="Sekhon M."/>
            <person name="Becker M.C."/>
            <person name="Fewell G.A."/>
            <person name="Delehaunty K.D."/>
            <person name="Miner T.L."/>
            <person name="Nash W.E."/>
            <person name="Kremitzki C."/>
            <person name="Oddy L."/>
            <person name="Du H."/>
            <person name="Sun H."/>
            <person name="Bradshaw-Cordum H."/>
            <person name="Ali J."/>
            <person name="Carter J."/>
            <person name="Cordes M."/>
            <person name="Harris A."/>
            <person name="Isak A."/>
            <person name="van Brunt A."/>
            <person name="Nguyen C."/>
            <person name="Du F."/>
            <person name="Courtney L."/>
            <person name="Kalicki J."/>
            <person name="Ozersky P."/>
            <person name="Abbott S."/>
            <person name="Armstrong J."/>
            <person name="Belter E.A."/>
            <person name="Caruso L."/>
            <person name="Cedroni M."/>
            <person name="Cotton M."/>
            <person name="Davidson T."/>
            <person name="Desai A."/>
            <person name="Elliott G."/>
            <person name="Erb T."/>
            <person name="Fronick C."/>
            <person name="Gaige T."/>
            <person name="Haakenson W."/>
            <person name="Haglund K."/>
            <person name="Holmes A."/>
            <person name="Harkins R."/>
            <person name="Kim K."/>
            <person name="Kruchowski S.S."/>
            <person name="Strong C.M."/>
            <person name="Grewal N."/>
            <person name="Goyea E."/>
            <person name="Hou S."/>
            <person name="Levy A."/>
            <person name="Martinka S."/>
            <person name="Mead K."/>
            <person name="McLellan M.D."/>
            <person name="Meyer R."/>
            <person name="Randall-Maher J."/>
            <person name="Tomlinson C."/>
            <person name="Dauphin-Kohlberg S."/>
            <person name="Kozlowicz-Reilly A."/>
            <person name="Shah N."/>
            <person name="Swearengen-Shahid S."/>
            <person name="Snider J."/>
            <person name="Strong J.T."/>
            <person name="Thompson J."/>
            <person name="Yoakum M."/>
            <person name="Leonard S."/>
            <person name="Pearman C."/>
            <person name="Trani L."/>
            <person name="Radionenko M."/>
            <person name="Waligorski J.E."/>
            <person name="Wang C."/>
            <person name="Rock S.M."/>
            <person name="Tin-Wollam A.-M."/>
            <person name="Maupin R."/>
            <person name="Latreille P."/>
            <person name="Wendl M.C."/>
            <person name="Yang S.-P."/>
            <person name="Pohl C."/>
            <person name="Wallis J.W."/>
            <person name="Spieth J."/>
            <person name="Bieri T.A."/>
            <person name="Berkowicz N."/>
            <person name="Nelson J.O."/>
            <person name="Osborne J."/>
            <person name="Ding L."/>
            <person name="Meyer R."/>
            <person name="Sabo A."/>
            <person name="Shotland Y."/>
            <person name="Sinha P."/>
            <person name="Wohldmann P.E."/>
            <person name="Cook L.L."/>
            <person name="Hickenbotham M.T."/>
            <person name="Eldred J."/>
            <person name="Williams D."/>
            <person name="Jones T.A."/>
            <person name="She X."/>
            <person name="Ciccarelli F.D."/>
            <person name="Izaurralde E."/>
            <person name="Taylor J."/>
            <person name="Schmutz J."/>
            <person name="Myers R.M."/>
            <person name="Cox D.R."/>
            <person name="Huang X."/>
            <person name="McPherson J.D."/>
            <person name="Mardis E.R."/>
            <person name="Clifton S.W."/>
            <person name="Warren W.C."/>
            <person name="Chinwalla A.T."/>
            <person name="Eddy S.R."/>
            <person name="Marra M.A."/>
            <person name="Ovcharenko I."/>
            <person name="Furey T.S."/>
            <person name="Miller W."/>
            <person name="Eichler E.E."/>
            <person name="Bork P."/>
            <person name="Suyama M."/>
            <person name="Torrents D."/>
            <person name="Waterston R.H."/>
            <person name="Wilson R.K."/>
        </authorList>
    </citation>
    <scope>NUCLEOTIDE SEQUENCE [LARGE SCALE GENOMIC DNA]</scope>
</reference>
<reference key="4">
    <citation type="submission" date="2005-07" db="EMBL/GenBank/DDBJ databases">
        <authorList>
            <person name="Mural R.J."/>
            <person name="Istrail S."/>
            <person name="Sutton G.G."/>
            <person name="Florea L."/>
            <person name="Halpern A.L."/>
            <person name="Mobarry C.M."/>
            <person name="Lippert R."/>
            <person name="Walenz B."/>
            <person name="Shatkay H."/>
            <person name="Dew I."/>
            <person name="Miller J.R."/>
            <person name="Flanigan M.J."/>
            <person name="Edwards N.J."/>
            <person name="Bolanos R."/>
            <person name="Fasulo D."/>
            <person name="Halldorsson B.V."/>
            <person name="Hannenhalli S."/>
            <person name="Turner R."/>
            <person name="Yooseph S."/>
            <person name="Lu F."/>
            <person name="Nusskern D.R."/>
            <person name="Shue B.C."/>
            <person name="Zheng X.H."/>
            <person name="Zhong F."/>
            <person name="Delcher A.L."/>
            <person name="Huson D.H."/>
            <person name="Kravitz S.A."/>
            <person name="Mouchard L."/>
            <person name="Reinert K."/>
            <person name="Remington K.A."/>
            <person name="Clark A.G."/>
            <person name="Waterman M.S."/>
            <person name="Eichler E.E."/>
            <person name="Adams M.D."/>
            <person name="Hunkapiller M.W."/>
            <person name="Myers E.W."/>
            <person name="Venter J.C."/>
        </authorList>
    </citation>
    <scope>NUCLEOTIDE SEQUENCE [LARGE SCALE GENOMIC DNA]</scope>
</reference>
<reference key="5">
    <citation type="journal article" date="2004" name="Genome Res.">
        <title>The status, quality, and expansion of the NIH full-length cDNA project: the Mammalian Gene Collection (MGC).</title>
        <authorList>
            <consortium name="The MGC Project Team"/>
        </authorList>
    </citation>
    <scope>NUCLEOTIDE SEQUENCE [LARGE SCALE MRNA] (ISOFORM 1)</scope>
    <scope>VARIANT ARG-964</scope>
    <source>
        <tissue>PNS</tissue>
    </source>
</reference>
<reference key="6">
    <citation type="journal article" date="1998" name="Thromb. Haemost.">
        <title>Platelet glycoprotein Ia* is the processed form of multimerin -- isolation and determination of N-terminal sequences of stored and released forms.</title>
        <authorList>
            <person name="Polgar J."/>
            <person name="Magnenat E."/>
            <person name="Wells T.N.C."/>
            <person name="Clemetson K.J."/>
        </authorList>
    </citation>
    <scope>PROTEIN SEQUENCE OF 184-198 AND 318-326</scope>
</reference>
<reference key="7">
    <citation type="journal article" date="2003" name="Nat. Biotechnol.">
        <title>Exploring proteomes and analyzing protein processing by mass spectrometric identification of sorted N-terminal peptides.</title>
        <authorList>
            <person name="Gevaert K."/>
            <person name="Goethals M."/>
            <person name="Martens L."/>
            <person name="Van Damme J."/>
            <person name="Staes A."/>
            <person name="Thomas G.R."/>
            <person name="Vandekerckhove J."/>
        </authorList>
    </citation>
    <scope>PROTEIN SEQUENCE OF 461-467</scope>
    <source>
        <tissue>Platelet</tissue>
    </source>
</reference>
<reference key="8">
    <citation type="journal article" date="1993" name="J. Clin. Invest.">
        <title>Multimerin is found in the alpha-granules of resting platelets and is synthesized by a megakaryocytic cell line.</title>
        <authorList>
            <person name="Hayward C.P.M."/>
            <person name="Bainton D.F."/>
            <person name="Smith J.W."/>
            <person name="Horsewood P."/>
            <person name="Stead R.H."/>
            <person name="Podor T.J."/>
            <person name="Warkentin T.E."/>
            <person name="Kelton J.G."/>
        </authorList>
    </citation>
    <scope>TISSUE SPECIFICITY</scope>
</reference>
<reference key="9">
    <citation type="journal article" date="1999" name="Thromb. Haemost.">
        <title>Platelet multimerin and its proteolytic processing.</title>
        <authorList>
            <person name="Hayward C.P.M."/>
        </authorList>
    </citation>
    <scope>SUBUNIT</scope>
</reference>
<reference key="10">
    <citation type="journal article" date="2005" name="J. Proteome Res.">
        <title>Human plasma N-glycoproteome analysis by immunoaffinity subtraction, hydrazide chemistry, and mass spectrometry.</title>
        <authorList>
            <person name="Liu T."/>
            <person name="Qian W.-J."/>
            <person name="Gritsenko M.A."/>
            <person name="Camp D.G. II"/>
            <person name="Monroe M.E."/>
            <person name="Moore R.J."/>
            <person name="Smith R.D."/>
        </authorList>
    </citation>
    <scope>GLYCOSYLATION [LARGE SCALE ANALYSIS] AT ASN-114; ASN-120; ASN-136; ASN-618 AND ASN-729</scope>
    <source>
        <tissue>Plasma</tissue>
    </source>
</reference>
<reference key="11">
    <citation type="journal article" date="2005" name="Thromb. Haemost.">
        <title>Analyses of cellular multimerin 1 receptors: in vitro evidence of binding mediated by alphaIIbbeta3 and alphavbeta3.</title>
        <authorList>
            <person name="Adam F."/>
            <person name="Zheng S."/>
            <person name="Joshi N."/>
            <person name="Kelton D.S."/>
            <person name="Sandhu A."/>
            <person name="Suehiro Y."/>
            <person name="Jeimy S.B."/>
            <person name="Santos A.V."/>
            <person name="Masse J.-M."/>
            <person name="Kelton J.G."/>
            <person name="Cramer E.M."/>
            <person name="Hayward C.P.M."/>
        </authorList>
    </citation>
    <scope>FUNCTION</scope>
</reference>
<reference key="12">
    <citation type="journal article" date="2006" name="Mol. Cell. Proteomics">
        <title>Elucidation of N-glycosylation sites on human platelet proteins: a glycoproteomic approach.</title>
        <authorList>
            <person name="Lewandrowski U."/>
            <person name="Moebius J."/>
            <person name="Walter U."/>
            <person name="Sickmann A."/>
        </authorList>
    </citation>
    <scope>GLYCOSYLATION [LARGE SCALE ANALYSIS] AT ASN-114</scope>
    <source>
        <tissue>Platelet</tissue>
    </source>
</reference>
<reference key="13">
    <citation type="journal article" date="2008" name="Thromb. Haemost.">
        <title>Multimerin 1 binds factor V and activated factor V with high affinity and inhibits thrombin generation.</title>
        <authorList>
            <person name="Jeimy S.B."/>
            <person name="Fuller N."/>
            <person name="Tasneem S."/>
            <person name="Segers K."/>
            <person name="Stafford A.R."/>
            <person name="Weitz J.I."/>
            <person name="Camire R.M."/>
            <person name="Nicolaes G.A.F."/>
            <person name="Hayward C.P.M."/>
        </authorList>
    </citation>
    <scope>FUNCTION</scope>
    <scope>INTERACTION WITH FACTOR V</scope>
</reference>
<reference key="14">
    <citation type="journal article" date="1996" name="Blood">
        <title>An autosomal dominant, qualitative platelet disorder associated with multimerin deficiency, abnormalities in platelet factor V, thrombospondin, von Willebrand factor, and fibrinogen and an epinephrine aggregation defect.</title>
        <authorList>
            <person name="Hayward C.P.M."/>
            <person name="Rivard G.E."/>
            <person name="Kane W.H."/>
            <person name="Drouin J."/>
            <person name="Zheng S."/>
            <person name="Moore J.C."/>
            <person name="Kelton J.G."/>
        </authorList>
    </citation>
    <scope>DISEASE</scope>
</reference>
<reference key="15">
    <citation type="journal article" date="2009" name="J. Proteome Res.">
        <title>Glycoproteomics analysis of human liver tissue by combination of multiple enzyme digestion and hydrazide chemistry.</title>
        <authorList>
            <person name="Chen R."/>
            <person name="Jiang X."/>
            <person name="Sun D."/>
            <person name="Han G."/>
            <person name="Wang F."/>
            <person name="Ye M."/>
            <person name="Wang L."/>
            <person name="Zou H."/>
        </authorList>
    </citation>
    <scope>GLYCOSYLATION [LARGE SCALE ANALYSIS] AT ASN-344; ASN-729; ASN-942 AND ASN-1020</scope>
    <source>
        <tissue>Liver</tissue>
    </source>
</reference>
<reference key="16">
    <citation type="journal article" date="2009" name="Mol. Cell. Proteomics">
        <title>A strategy for precise and large scale identification of core fucosylated glycoproteins.</title>
        <authorList>
            <person name="Jia W."/>
            <person name="Lu Z."/>
            <person name="Fu Y."/>
            <person name="Wang H.P."/>
            <person name="Wang L.H."/>
            <person name="Chi H."/>
            <person name="Yuan Z.F."/>
            <person name="Zheng Z.B."/>
            <person name="Song L.N."/>
            <person name="Han H.H."/>
            <person name="Liang Y.M."/>
            <person name="Wang J.L."/>
            <person name="Cai Y."/>
            <person name="Zhang Y.K."/>
            <person name="Deng Y.L."/>
            <person name="Ying W.T."/>
            <person name="He S.M."/>
            <person name="Qian X.H."/>
        </authorList>
    </citation>
    <scope>GLYCOSYLATION AT ASN-136</scope>
</reference>
<reference key="17">
    <citation type="journal article" date="2024" name="Mol. Cell. Proteomics">
        <title>Analysis of the Healthy Platelet Proteome Identifies a New Form of Domain-Specific O-Fucosylation.</title>
        <authorList>
            <person name="Houlahan C.B."/>
            <person name="Kong Y."/>
            <person name="Johnston B."/>
            <person name="Cielesh M."/>
            <person name="Chau T.H."/>
            <person name="Fenwick J."/>
            <person name="Coleman P.R."/>
            <person name="Hao H."/>
            <person name="Haltiwanger R.S."/>
            <person name="Thaysen-Andersen M."/>
            <person name="Passam F.H."/>
            <person name="Larance M."/>
        </authorList>
    </citation>
    <scope>GLYCOSYLATION AT THR-216 AND THR-1055</scope>
    <scope>SUBCELLULAR LOCATION</scope>
    <scope>MUTAGENESIS OF THR-216 AND THR-1055</scope>
</reference>
<reference key="18">
    <citation type="journal article" date="2025" name="Nat. Chem. Biol.">
        <title>FUT10 and FUT11 are protein O-fucosyltransferases that modify protein EMI domains.</title>
        <authorList>
            <person name="Hao H."/>
            <person name="Yuan Y."/>
            <person name="Ito A."/>
            <person name="Eberand B.M."/>
            <person name="Tjondro H."/>
            <person name="Cielesh M."/>
            <person name="Norris N."/>
            <person name="Moreno C.L."/>
            <person name="Maxwell J.W.C."/>
            <person name="Neely G.G."/>
            <person name="Payne R.J."/>
            <person name="Kebede M.A."/>
            <person name="Urbauer R.J.B."/>
            <person name="Passam F.H."/>
            <person name="Larance M."/>
            <person name="Haltiwanger R.S."/>
        </authorList>
    </citation>
    <scope>SUBCELLULAR LOCATION</scope>
    <scope>GLYCOSYLATION AT THR-216; THR-265 AND THR-1055</scope>
    <scope>MUTAGENESIS OF THR-216; THR-265 AND THR-1055</scope>
</reference>